<gene>
    <name evidence="1" type="primary">grpE</name>
    <name type="ordered locus">Tbd_1537</name>
</gene>
<keyword id="KW-0143">Chaperone</keyword>
<keyword id="KW-0963">Cytoplasm</keyword>
<keyword id="KW-1185">Reference proteome</keyword>
<keyword id="KW-0346">Stress response</keyword>
<comment type="function">
    <text evidence="1">Participates actively in the response to hyperosmotic and heat shock by preventing the aggregation of stress-denatured proteins, in association with DnaK and GrpE. It is the nucleotide exchange factor for DnaK and may function as a thermosensor. Unfolded proteins bind initially to DnaJ; upon interaction with the DnaJ-bound protein, DnaK hydrolyzes its bound ATP, resulting in the formation of a stable complex. GrpE releases ADP from DnaK; ATP binding to DnaK triggers the release of the substrate protein, thus completing the reaction cycle. Several rounds of ATP-dependent interactions between DnaJ, DnaK and GrpE are required for fully efficient folding.</text>
</comment>
<comment type="subunit">
    <text evidence="1">Homodimer.</text>
</comment>
<comment type="subcellular location">
    <subcellularLocation>
        <location evidence="1">Cytoplasm</location>
    </subcellularLocation>
</comment>
<comment type="similarity">
    <text evidence="1">Belongs to the GrpE family.</text>
</comment>
<reference key="1">
    <citation type="journal article" date="2006" name="J. Bacteriol.">
        <title>The genome sequence of the obligately chemolithoautotrophic, facultatively anaerobic bacterium Thiobacillus denitrificans.</title>
        <authorList>
            <person name="Beller H.R."/>
            <person name="Chain P.S."/>
            <person name="Letain T.E."/>
            <person name="Chakicherla A."/>
            <person name="Larimer F.W."/>
            <person name="Richardson P.M."/>
            <person name="Coleman M.A."/>
            <person name="Wood A.P."/>
            <person name="Kelly D.P."/>
        </authorList>
    </citation>
    <scope>NUCLEOTIDE SEQUENCE [LARGE SCALE GENOMIC DNA]</scope>
    <source>
        <strain>ATCC 25259 / T1</strain>
    </source>
</reference>
<sequence length="173" mass="19147">MQDEFKTDTPRTEAGSEKETMPSMEELLKAAELAAAEHHDAWLRAKAETENMRRRAAEDVDKARKFAVESFAGELLAVKDSLEAALAAESPSVDNLKDGVTLTLKQLSAVFGKFNLHDIEPLGEKFDPHLHQAIQVVESEQPANTVVTVLQKGYRLHDRTLRPALVMVAKGKD</sequence>
<feature type="chain" id="PRO_1000137639" description="Protein GrpE">
    <location>
        <begin position="1"/>
        <end position="173"/>
    </location>
</feature>
<feature type="region of interest" description="Disordered" evidence="2">
    <location>
        <begin position="1"/>
        <end position="23"/>
    </location>
</feature>
<feature type="compositionally biased region" description="Basic and acidic residues" evidence="2">
    <location>
        <begin position="1"/>
        <end position="20"/>
    </location>
</feature>
<evidence type="ECO:0000255" key="1">
    <source>
        <dbReference type="HAMAP-Rule" id="MF_01151"/>
    </source>
</evidence>
<evidence type="ECO:0000256" key="2">
    <source>
        <dbReference type="SAM" id="MobiDB-lite"/>
    </source>
</evidence>
<name>GRPE_THIDA</name>
<dbReference type="EMBL" id="CP000116">
    <property type="protein sequence ID" value="AAZ97490.1"/>
    <property type="molecule type" value="Genomic_DNA"/>
</dbReference>
<dbReference type="RefSeq" id="WP_011312049.1">
    <property type="nucleotide sequence ID" value="NC_007404.1"/>
</dbReference>
<dbReference type="SMR" id="Q3SIN5"/>
<dbReference type="STRING" id="292415.Tbd_1537"/>
<dbReference type="KEGG" id="tbd:Tbd_1537"/>
<dbReference type="eggNOG" id="COG0576">
    <property type="taxonomic scope" value="Bacteria"/>
</dbReference>
<dbReference type="HOGENOM" id="CLU_057217_6_1_4"/>
<dbReference type="OrthoDB" id="9789811at2"/>
<dbReference type="Proteomes" id="UP000008291">
    <property type="component" value="Chromosome"/>
</dbReference>
<dbReference type="GO" id="GO:0005829">
    <property type="term" value="C:cytosol"/>
    <property type="evidence" value="ECO:0007669"/>
    <property type="project" value="TreeGrafter"/>
</dbReference>
<dbReference type="GO" id="GO:0000774">
    <property type="term" value="F:adenyl-nucleotide exchange factor activity"/>
    <property type="evidence" value="ECO:0007669"/>
    <property type="project" value="InterPro"/>
</dbReference>
<dbReference type="GO" id="GO:0042803">
    <property type="term" value="F:protein homodimerization activity"/>
    <property type="evidence" value="ECO:0007669"/>
    <property type="project" value="InterPro"/>
</dbReference>
<dbReference type="GO" id="GO:0051087">
    <property type="term" value="F:protein-folding chaperone binding"/>
    <property type="evidence" value="ECO:0007669"/>
    <property type="project" value="InterPro"/>
</dbReference>
<dbReference type="GO" id="GO:0051082">
    <property type="term" value="F:unfolded protein binding"/>
    <property type="evidence" value="ECO:0007669"/>
    <property type="project" value="TreeGrafter"/>
</dbReference>
<dbReference type="GO" id="GO:0006457">
    <property type="term" value="P:protein folding"/>
    <property type="evidence" value="ECO:0007669"/>
    <property type="project" value="InterPro"/>
</dbReference>
<dbReference type="CDD" id="cd00446">
    <property type="entry name" value="GrpE"/>
    <property type="match status" value="1"/>
</dbReference>
<dbReference type="FunFam" id="2.30.22.10:FF:000001">
    <property type="entry name" value="Protein GrpE"/>
    <property type="match status" value="1"/>
</dbReference>
<dbReference type="Gene3D" id="3.90.20.20">
    <property type="match status" value="1"/>
</dbReference>
<dbReference type="Gene3D" id="2.30.22.10">
    <property type="entry name" value="Head domain of nucleotide exchange factor GrpE"/>
    <property type="match status" value="1"/>
</dbReference>
<dbReference type="HAMAP" id="MF_01151">
    <property type="entry name" value="GrpE"/>
    <property type="match status" value="1"/>
</dbReference>
<dbReference type="InterPro" id="IPR000740">
    <property type="entry name" value="GrpE"/>
</dbReference>
<dbReference type="InterPro" id="IPR013805">
    <property type="entry name" value="GrpE_coiled_coil"/>
</dbReference>
<dbReference type="InterPro" id="IPR009012">
    <property type="entry name" value="GrpE_head"/>
</dbReference>
<dbReference type="NCBIfam" id="NF010737">
    <property type="entry name" value="PRK14139.1"/>
    <property type="match status" value="1"/>
</dbReference>
<dbReference type="NCBIfam" id="NF010738">
    <property type="entry name" value="PRK14140.1"/>
    <property type="match status" value="1"/>
</dbReference>
<dbReference type="NCBIfam" id="NF010748">
    <property type="entry name" value="PRK14150.1"/>
    <property type="match status" value="1"/>
</dbReference>
<dbReference type="PANTHER" id="PTHR21237">
    <property type="entry name" value="GRPE PROTEIN"/>
    <property type="match status" value="1"/>
</dbReference>
<dbReference type="PANTHER" id="PTHR21237:SF23">
    <property type="entry name" value="GRPE PROTEIN HOMOLOG, MITOCHONDRIAL"/>
    <property type="match status" value="1"/>
</dbReference>
<dbReference type="Pfam" id="PF01025">
    <property type="entry name" value="GrpE"/>
    <property type="match status" value="1"/>
</dbReference>
<dbReference type="PRINTS" id="PR00773">
    <property type="entry name" value="GRPEPROTEIN"/>
</dbReference>
<dbReference type="SUPFAM" id="SSF58014">
    <property type="entry name" value="Coiled-coil domain of nucleotide exchange factor GrpE"/>
    <property type="match status" value="1"/>
</dbReference>
<dbReference type="SUPFAM" id="SSF51064">
    <property type="entry name" value="Head domain of nucleotide exchange factor GrpE"/>
    <property type="match status" value="1"/>
</dbReference>
<dbReference type="PROSITE" id="PS01071">
    <property type="entry name" value="GRPE"/>
    <property type="match status" value="1"/>
</dbReference>
<protein>
    <recommendedName>
        <fullName evidence="1">Protein GrpE</fullName>
    </recommendedName>
    <alternativeName>
        <fullName evidence="1">HSP-70 cofactor</fullName>
    </alternativeName>
</protein>
<organism>
    <name type="scientific">Thiobacillus denitrificans (strain ATCC 25259 / T1)</name>
    <dbReference type="NCBI Taxonomy" id="292415"/>
    <lineage>
        <taxon>Bacteria</taxon>
        <taxon>Pseudomonadati</taxon>
        <taxon>Pseudomonadota</taxon>
        <taxon>Betaproteobacteria</taxon>
        <taxon>Nitrosomonadales</taxon>
        <taxon>Thiobacillaceae</taxon>
        <taxon>Thiobacillus</taxon>
    </lineage>
</organism>
<accession>Q3SIN5</accession>
<proteinExistence type="inferred from homology"/>